<keyword id="KW-0238">DNA-binding</keyword>
<keyword id="KW-0371">Homeobox</keyword>
<keyword id="KW-0539">Nucleus</keyword>
<keyword id="KW-1185">Reference proteome</keyword>
<keyword id="KW-0804">Transcription</keyword>
<keyword id="KW-0805">Transcription regulation</keyword>
<proteinExistence type="evidence at protein level"/>
<organism>
    <name type="scientific">Arabidopsis thaliana</name>
    <name type="common">Mouse-ear cress</name>
    <dbReference type="NCBI Taxonomy" id="3702"/>
    <lineage>
        <taxon>Eukaryota</taxon>
        <taxon>Viridiplantae</taxon>
        <taxon>Streptophyta</taxon>
        <taxon>Embryophyta</taxon>
        <taxon>Tracheophyta</taxon>
        <taxon>Spermatophyta</taxon>
        <taxon>Magnoliopsida</taxon>
        <taxon>eudicotyledons</taxon>
        <taxon>Gunneridae</taxon>
        <taxon>Pentapetalae</taxon>
        <taxon>rosids</taxon>
        <taxon>malvids</taxon>
        <taxon>Brassicales</taxon>
        <taxon>Brassicaceae</taxon>
        <taxon>Camelineae</taxon>
        <taxon>Arabidopsis</taxon>
    </lineage>
</organism>
<dbReference type="EMBL" id="AC007047">
    <property type="protein sequence ID" value="AAD22299.1"/>
    <property type="molecule type" value="Genomic_DNA"/>
</dbReference>
<dbReference type="EMBL" id="CP002685">
    <property type="protein sequence ID" value="AEC06493.1"/>
    <property type="molecule type" value="Genomic_DNA"/>
</dbReference>
<dbReference type="EMBL" id="AY056796">
    <property type="protein sequence ID" value="AAL10487.1"/>
    <property type="molecule type" value="mRNA"/>
</dbReference>
<dbReference type="EMBL" id="BT000609">
    <property type="protein sequence ID" value="AAN18176.1"/>
    <property type="molecule type" value="mRNA"/>
</dbReference>
<dbReference type="PIR" id="H84539">
    <property type="entry name" value="H84539"/>
</dbReference>
<dbReference type="RefSeq" id="NP_179233.1">
    <property type="nucleotide sequence ID" value="NM_127194.4"/>
</dbReference>
<dbReference type="SMR" id="Q9SIW1"/>
<dbReference type="BioGRID" id="1495">
    <property type="interactions" value="11"/>
</dbReference>
<dbReference type="FunCoup" id="Q9SIW1">
    <property type="interactions" value="729"/>
</dbReference>
<dbReference type="IntAct" id="Q9SIW1">
    <property type="interactions" value="11"/>
</dbReference>
<dbReference type="STRING" id="3702.Q9SIW1"/>
<dbReference type="PaxDb" id="3702-AT2G16400.1"/>
<dbReference type="ProteomicsDB" id="240356"/>
<dbReference type="EnsemblPlants" id="AT2G16400.1">
    <property type="protein sequence ID" value="AT2G16400.1"/>
    <property type="gene ID" value="AT2G16400"/>
</dbReference>
<dbReference type="GeneID" id="816137"/>
<dbReference type="Gramene" id="AT2G16400.1">
    <property type="protein sequence ID" value="AT2G16400.1"/>
    <property type="gene ID" value="AT2G16400"/>
</dbReference>
<dbReference type="KEGG" id="ath:AT2G16400"/>
<dbReference type="Araport" id="AT2G16400"/>
<dbReference type="TAIR" id="AT2G16400">
    <property type="gene designation" value="BLH7"/>
</dbReference>
<dbReference type="eggNOG" id="KOG0773">
    <property type="taxonomic scope" value="Eukaryota"/>
</dbReference>
<dbReference type="HOGENOM" id="CLU_011058_6_0_1"/>
<dbReference type="InParanoid" id="Q9SIW1"/>
<dbReference type="OMA" id="QMVEIQD"/>
<dbReference type="OrthoDB" id="10056939at2759"/>
<dbReference type="PhylomeDB" id="Q9SIW1"/>
<dbReference type="PRO" id="PR:Q9SIW1"/>
<dbReference type="Proteomes" id="UP000006548">
    <property type="component" value="Chromosome 2"/>
</dbReference>
<dbReference type="ExpressionAtlas" id="Q9SIW1">
    <property type="expression patterns" value="baseline and differential"/>
</dbReference>
<dbReference type="GO" id="GO:0005634">
    <property type="term" value="C:nucleus"/>
    <property type="evidence" value="ECO:0007669"/>
    <property type="project" value="UniProtKB-SubCell"/>
</dbReference>
<dbReference type="GO" id="GO:0003700">
    <property type="term" value="F:DNA-binding transcription factor activity"/>
    <property type="evidence" value="ECO:0000250"/>
    <property type="project" value="TAIR"/>
</dbReference>
<dbReference type="GO" id="GO:0000976">
    <property type="term" value="F:transcription cis-regulatory region binding"/>
    <property type="evidence" value="ECO:0000353"/>
    <property type="project" value="TAIR"/>
</dbReference>
<dbReference type="CDD" id="cd00086">
    <property type="entry name" value="homeodomain"/>
    <property type="match status" value="1"/>
</dbReference>
<dbReference type="Gene3D" id="1.10.10.60">
    <property type="entry name" value="Homeodomain-like"/>
    <property type="match status" value="1"/>
</dbReference>
<dbReference type="InterPro" id="IPR001356">
    <property type="entry name" value="HD"/>
</dbReference>
<dbReference type="InterPro" id="IPR009057">
    <property type="entry name" value="Homeodomain-like_sf"/>
</dbReference>
<dbReference type="InterPro" id="IPR008422">
    <property type="entry name" value="KN_HD"/>
</dbReference>
<dbReference type="InterPro" id="IPR006563">
    <property type="entry name" value="POX_dom"/>
</dbReference>
<dbReference type="InterPro" id="IPR050224">
    <property type="entry name" value="TALE_homeobox"/>
</dbReference>
<dbReference type="PANTHER" id="PTHR11850">
    <property type="entry name" value="HOMEOBOX PROTEIN TRANSCRIPTION FACTORS"/>
    <property type="match status" value="1"/>
</dbReference>
<dbReference type="Pfam" id="PF05920">
    <property type="entry name" value="Homeobox_KN"/>
    <property type="match status" value="1"/>
</dbReference>
<dbReference type="Pfam" id="PF07526">
    <property type="entry name" value="POX"/>
    <property type="match status" value="1"/>
</dbReference>
<dbReference type="SMART" id="SM00389">
    <property type="entry name" value="HOX"/>
    <property type="match status" value="1"/>
</dbReference>
<dbReference type="SMART" id="SM00574">
    <property type="entry name" value="POX"/>
    <property type="match status" value="1"/>
</dbReference>
<dbReference type="SUPFAM" id="SSF46689">
    <property type="entry name" value="Homeodomain-like"/>
    <property type="match status" value="1"/>
</dbReference>
<dbReference type="PROSITE" id="PS00027">
    <property type="entry name" value="HOMEOBOX_1"/>
    <property type="match status" value="1"/>
</dbReference>
<dbReference type="PROSITE" id="PS50071">
    <property type="entry name" value="HOMEOBOX_2"/>
    <property type="match status" value="1"/>
</dbReference>
<accession>Q9SIW1</accession>
<accession>Q93ZM1</accession>
<name>BLH7_ARATH</name>
<evidence type="ECO:0000250" key="1"/>
<evidence type="ECO:0000255" key="2">
    <source>
        <dbReference type="PROSITE-ProRule" id="PRU00108"/>
    </source>
</evidence>
<evidence type="ECO:0000256" key="3">
    <source>
        <dbReference type="SAM" id="MobiDB-lite"/>
    </source>
</evidence>
<evidence type="ECO:0000305" key="4"/>
<comment type="subunit">
    <text evidence="1">May form heterodimeric complexes with TALE/KNOX proteins.</text>
</comment>
<comment type="interaction">
    <interactant intactId="EBI-1153967">
        <id>Q9SIW1</id>
    </interactant>
    <interactant intactId="EBI-530486">
        <id>P46639</id>
        <label>KNAT1</label>
    </interactant>
    <organismsDiffer>false</organismsDiffer>
    <experiments>5</experiments>
</comment>
<comment type="interaction">
    <interactant intactId="EBI-1153967">
        <id>Q9SIW1</id>
    </interactant>
    <interactant intactId="EBI-1153908">
        <id>P48000</id>
        <label>KNAT3</label>
    </interactant>
    <organismsDiffer>false</organismsDiffer>
    <experiments>3</experiments>
</comment>
<comment type="interaction">
    <interactant intactId="EBI-1153967">
        <id>Q9SIW1</id>
    </interactant>
    <interactant intactId="EBI-530499">
        <id>Q84JS6</id>
        <label>KNAT6</label>
    </interactant>
    <organismsDiffer>false</organismsDiffer>
    <experiments>3</experiments>
</comment>
<comment type="subcellular location">
    <subcellularLocation>
        <location evidence="4">Nucleus</location>
    </subcellularLocation>
</comment>
<comment type="domain">
    <text>The SR/KY and BELL domains are responsive for the interaction between the TALE/BELL proteins and the TALE/KNOX proteins.</text>
</comment>
<comment type="similarity">
    <text evidence="4">Belongs to the TALE/BELL homeobox family.</text>
</comment>
<sequence>MATYYKTGSSEIYSRPEFVPGNAMNYTNSFTETFPRDSTNNVSPSKEIQVLSSLGGVSQMVEIQDSGSWRDQEDNDRNRFPVMRRLGLSSQIETSRGNNNNEYATQVVSGFTRTIHNSKYLKAAQELLDETVNVKKALKQFQPEGDKINEVKEKNLQTNTAEIPQAERQELQSKLSKLLSILDEVDRNYKQYYHQMQIVVSSFDVIAGCGAAKPYTALALQTISRHFRCLRDAISGQILVIRKSLGGEQDGSDGRGVGISRLRNVDQQVRQQRALQRLGVMQPHTWRPQRGLPDSSVLVLRAWLFEHFLHPYPKDSDKIMLARQTGLSRGQVSNWFINARVRLWKPMVEEMYKEEFTDALQENDPNQSSENTPEITEIQELQTESSSNNGHVPGVASSSMRQNTVAHGGDRFMMVTDMTRNGNGGMSLTLGIQNSDARGDVPMSGGIDNYKNTISGTDLQYLNSRNHQHQIGSSQLLHDFVA</sequence>
<gene>
    <name type="primary">BLH7</name>
    <name type="ordered locus">At2g16400</name>
    <name type="ORF">F16F14.10</name>
</gene>
<reference key="1">
    <citation type="journal article" date="1999" name="Nature">
        <title>Sequence and analysis of chromosome 2 of the plant Arabidopsis thaliana.</title>
        <authorList>
            <person name="Lin X."/>
            <person name="Kaul S."/>
            <person name="Rounsley S.D."/>
            <person name="Shea T.P."/>
            <person name="Benito M.-I."/>
            <person name="Town C.D."/>
            <person name="Fujii C.Y."/>
            <person name="Mason T.M."/>
            <person name="Bowman C.L."/>
            <person name="Barnstead M.E."/>
            <person name="Feldblyum T.V."/>
            <person name="Buell C.R."/>
            <person name="Ketchum K.A."/>
            <person name="Lee J.J."/>
            <person name="Ronning C.M."/>
            <person name="Koo H.L."/>
            <person name="Moffat K.S."/>
            <person name="Cronin L.A."/>
            <person name="Shen M."/>
            <person name="Pai G."/>
            <person name="Van Aken S."/>
            <person name="Umayam L."/>
            <person name="Tallon L.J."/>
            <person name="Gill J.E."/>
            <person name="Adams M.D."/>
            <person name="Carrera A.J."/>
            <person name="Creasy T.H."/>
            <person name="Goodman H.M."/>
            <person name="Somerville C.R."/>
            <person name="Copenhaver G.P."/>
            <person name="Preuss D."/>
            <person name="Nierman W.C."/>
            <person name="White O."/>
            <person name="Eisen J.A."/>
            <person name="Salzberg S.L."/>
            <person name="Fraser C.M."/>
            <person name="Venter J.C."/>
        </authorList>
    </citation>
    <scope>NUCLEOTIDE SEQUENCE [LARGE SCALE GENOMIC DNA]</scope>
    <source>
        <strain>cv. Columbia</strain>
    </source>
</reference>
<reference key="2">
    <citation type="journal article" date="2017" name="Plant J.">
        <title>Araport11: a complete reannotation of the Arabidopsis thaliana reference genome.</title>
        <authorList>
            <person name="Cheng C.Y."/>
            <person name="Krishnakumar V."/>
            <person name="Chan A.P."/>
            <person name="Thibaud-Nissen F."/>
            <person name="Schobel S."/>
            <person name="Town C.D."/>
        </authorList>
    </citation>
    <scope>GENOME REANNOTATION</scope>
    <source>
        <strain>cv. Columbia</strain>
    </source>
</reference>
<reference key="3">
    <citation type="journal article" date="2003" name="Science">
        <title>Empirical analysis of transcriptional activity in the Arabidopsis genome.</title>
        <authorList>
            <person name="Yamada K."/>
            <person name="Lim J."/>
            <person name="Dale J.M."/>
            <person name="Chen H."/>
            <person name="Shinn P."/>
            <person name="Palm C.J."/>
            <person name="Southwick A.M."/>
            <person name="Wu H.C."/>
            <person name="Kim C.J."/>
            <person name="Nguyen M."/>
            <person name="Pham P.K."/>
            <person name="Cheuk R.F."/>
            <person name="Karlin-Newmann G."/>
            <person name="Liu S.X."/>
            <person name="Lam B."/>
            <person name="Sakano H."/>
            <person name="Wu T."/>
            <person name="Yu G."/>
            <person name="Miranda M."/>
            <person name="Quach H.L."/>
            <person name="Tripp M."/>
            <person name="Chang C.H."/>
            <person name="Lee J.M."/>
            <person name="Toriumi M.J."/>
            <person name="Chan M.M."/>
            <person name="Tang C.C."/>
            <person name="Onodera C.S."/>
            <person name="Deng J.M."/>
            <person name="Akiyama K."/>
            <person name="Ansari Y."/>
            <person name="Arakawa T."/>
            <person name="Banh J."/>
            <person name="Banno F."/>
            <person name="Bowser L."/>
            <person name="Brooks S.Y."/>
            <person name="Carninci P."/>
            <person name="Chao Q."/>
            <person name="Choy N."/>
            <person name="Enju A."/>
            <person name="Goldsmith A.D."/>
            <person name="Gurjal M."/>
            <person name="Hansen N.F."/>
            <person name="Hayashizaki Y."/>
            <person name="Johnson-Hopson C."/>
            <person name="Hsuan V.W."/>
            <person name="Iida K."/>
            <person name="Karnes M."/>
            <person name="Khan S."/>
            <person name="Koesema E."/>
            <person name="Ishida J."/>
            <person name="Jiang P.X."/>
            <person name="Jones T."/>
            <person name="Kawai J."/>
            <person name="Kamiya A."/>
            <person name="Meyers C."/>
            <person name="Nakajima M."/>
            <person name="Narusaka M."/>
            <person name="Seki M."/>
            <person name="Sakurai T."/>
            <person name="Satou M."/>
            <person name="Tamse R."/>
            <person name="Vaysberg M."/>
            <person name="Wallender E.K."/>
            <person name="Wong C."/>
            <person name="Yamamura Y."/>
            <person name="Yuan S."/>
            <person name="Shinozaki K."/>
            <person name="Davis R.W."/>
            <person name="Theologis A."/>
            <person name="Ecker J.R."/>
        </authorList>
    </citation>
    <scope>NUCLEOTIDE SEQUENCE [LARGE SCALE MRNA]</scope>
    <source>
        <strain>cv. Columbia</strain>
    </source>
</reference>
<reference key="4">
    <citation type="journal article" date="2004" name="Curr. Biol.">
        <title>Competence to respond to floral inductive signals requires the homeobox genes PENNYWISE and POUND-FOOLISH.</title>
        <authorList>
            <person name="Smith H.M.S."/>
            <person name="Campbell B.C.C."/>
            <person name="Hake S."/>
        </authorList>
    </citation>
    <scope>GENE FAMILY ORGANIZATION</scope>
</reference>
<protein>
    <recommendedName>
        <fullName>BEL1-like homeodomain protein 7</fullName>
        <shortName>BEL1-like protein 7</shortName>
    </recommendedName>
</protein>
<feature type="chain" id="PRO_0000315463" description="BEL1-like homeodomain protein 7">
    <location>
        <begin position="1"/>
        <end position="482"/>
    </location>
</feature>
<feature type="DNA-binding region" description="Homeobox" evidence="2">
    <location>
        <begin position="285"/>
        <end position="347"/>
    </location>
</feature>
<feature type="region of interest" description="SR/KY domain">
    <location>
        <begin position="118"/>
        <end position="134"/>
    </location>
</feature>
<feature type="region of interest" description="BELL domain">
    <location>
        <begin position="167"/>
        <end position="238"/>
    </location>
</feature>
<feature type="region of interest" description="Disordered" evidence="3">
    <location>
        <begin position="358"/>
        <end position="401"/>
    </location>
</feature>
<feature type="compositionally biased region" description="Polar residues" evidence="3">
    <location>
        <begin position="363"/>
        <end position="401"/>
    </location>
</feature>
<feature type="sequence conflict" description="In Ref. 3; AAL10487/AAN18176." evidence="4" ref="3">
    <original>T</original>
    <variation>I</variation>
    <location>
        <position position="453"/>
    </location>
</feature>